<protein>
    <recommendedName>
        <fullName evidence="1">Probable phosphatase YcdX</fullName>
        <ecNumber evidence="1">3.1.3.-</ecNumber>
    </recommendedName>
</protein>
<feature type="chain" id="PRO_1000087807" description="Probable phosphatase YcdX">
    <location>
        <begin position="1"/>
        <end position="245"/>
    </location>
</feature>
<feature type="binding site" evidence="1">
    <location>
        <position position="7"/>
    </location>
    <ligand>
        <name>Zn(2+)</name>
        <dbReference type="ChEBI" id="CHEBI:29105"/>
        <label>1</label>
    </ligand>
</feature>
<feature type="binding site" evidence="1">
    <location>
        <position position="9"/>
    </location>
    <ligand>
        <name>Zn(2+)</name>
        <dbReference type="ChEBI" id="CHEBI:29105"/>
        <label>1</label>
    </ligand>
</feature>
<feature type="binding site" evidence="1">
    <location>
        <position position="15"/>
    </location>
    <ligand>
        <name>Zn(2+)</name>
        <dbReference type="ChEBI" id="CHEBI:29105"/>
        <label>2</label>
    </ligand>
</feature>
<feature type="binding site" evidence="1">
    <location>
        <position position="40"/>
    </location>
    <ligand>
        <name>Zn(2+)</name>
        <dbReference type="ChEBI" id="CHEBI:29105"/>
        <label>2</label>
    </ligand>
</feature>
<feature type="binding site" evidence="1">
    <location>
        <position position="73"/>
    </location>
    <ligand>
        <name>Zn(2+)</name>
        <dbReference type="ChEBI" id="CHEBI:29105"/>
        <label>1</label>
    </ligand>
</feature>
<feature type="binding site" evidence="1">
    <location>
        <position position="73"/>
    </location>
    <ligand>
        <name>Zn(2+)</name>
        <dbReference type="ChEBI" id="CHEBI:29105"/>
        <label>3</label>
    </ligand>
</feature>
<feature type="binding site" evidence="1">
    <location>
        <position position="101"/>
    </location>
    <ligand>
        <name>Zn(2+)</name>
        <dbReference type="ChEBI" id="CHEBI:29105"/>
        <label>3</label>
    </ligand>
</feature>
<feature type="binding site" evidence="1">
    <location>
        <position position="131"/>
    </location>
    <ligand>
        <name>Zn(2+)</name>
        <dbReference type="ChEBI" id="CHEBI:29105"/>
        <label>3</label>
    </ligand>
</feature>
<feature type="binding site" evidence="1">
    <location>
        <position position="192"/>
    </location>
    <ligand>
        <name>Zn(2+)</name>
        <dbReference type="ChEBI" id="CHEBI:29105"/>
        <label>1</label>
    </ligand>
</feature>
<feature type="binding site" evidence="1">
    <location>
        <position position="194"/>
    </location>
    <ligand>
        <name>Zn(2+)</name>
        <dbReference type="ChEBI" id="CHEBI:29105"/>
        <label>2</label>
    </ligand>
</feature>
<sequence>MYPVDLHMHTVASTHAYSTLSDYIAEAKRKGIKLFAITDHGPDMEDAPHHWHFINMRIWPRLVDGVGILRGIEANIKNINGEIDCSGKMFDSLDLIIAGFHELVFAPHDKETNTQAMIATIASGKVHIISHPGNPKYPVEVKAVAQAAAKHHVALEINNSSFLHSRKGSEDNCRAVAAAVRDAGGWVALGSDSHTAFTLGDFTECRKILDAVDFPEDRILNVSPQRLLSFLESRGMAPVPEFAEL</sequence>
<gene>
    <name evidence="1" type="primary">ycdX</name>
    <name type="ordered locus">SARI_01861</name>
</gene>
<comment type="cofactor">
    <cofactor evidence="1">
        <name>Zn(2+)</name>
        <dbReference type="ChEBI" id="CHEBI:29105"/>
    </cofactor>
    <text evidence="1">Binds 3 Zn(2+) ions per subunit.</text>
</comment>
<comment type="subunit">
    <text evidence="1">Homotrimer.</text>
</comment>
<comment type="similarity">
    <text evidence="1">Belongs to the PHP family.</text>
</comment>
<dbReference type="EC" id="3.1.3.-" evidence="1"/>
<dbReference type="EMBL" id="CP000880">
    <property type="protein sequence ID" value="ABX21745.1"/>
    <property type="molecule type" value="Genomic_DNA"/>
</dbReference>
<dbReference type="SMR" id="A9MH26"/>
<dbReference type="STRING" id="41514.SARI_01861"/>
<dbReference type="KEGG" id="ses:SARI_01861"/>
<dbReference type="HOGENOM" id="CLU_061999_0_1_6"/>
<dbReference type="Proteomes" id="UP000002084">
    <property type="component" value="Chromosome"/>
</dbReference>
<dbReference type="GO" id="GO:0005829">
    <property type="term" value="C:cytosol"/>
    <property type="evidence" value="ECO:0007669"/>
    <property type="project" value="TreeGrafter"/>
</dbReference>
<dbReference type="GO" id="GO:0016791">
    <property type="term" value="F:phosphatase activity"/>
    <property type="evidence" value="ECO:0007669"/>
    <property type="project" value="UniProtKB-UniRule"/>
</dbReference>
<dbReference type="GO" id="GO:0008270">
    <property type="term" value="F:zinc ion binding"/>
    <property type="evidence" value="ECO:0007669"/>
    <property type="project" value="UniProtKB-UniRule"/>
</dbReference>
<dbReference type="GO" id="GO:0071978">
    <property type="term" value="P:bacterial-type flagellum-dependent swarming motility"/>
    <property type="evidence" value="ECO:0007669"/>
    <property type="project" value="TreeGrafter"/>
</dbReference>
<dbReference type="CDD" id="cd07437">
    <property type="entry name" value="PHP_HisPPase_Ycdx_like"/>
    <property type="match status" value="1"/>
</dbReference>
<dbReference type="FunFam" id="3.20.20.140:FF:000008">
    <property type="entry name" value="Probable phosphatase YcdX"/>
    <property type="match status" value="1"/>
</dbReference>
<dbReference type="Gene3D" id="3.20.20.140">
    <property type="entry name" value="Metal-dependent hydrolases"/>
    <property type="match status" value="1"/>
</dbReference>
<dbReference type="HAMAP" id="MF_01561">
    <property type="entry name" value="YcdX_phosphat"/>
    <property type="match status" value="1"/>
</dbReference>
<dbReference type="InterPro" id="IPR023710">
    <property type="entry name" value="Phosphatase_YcdX_put"/>
</dbReference>
<dbReference type="InterPro" id="IPR004013">
    <property type="entry name" value="PHP_dom"/>
</dbReference>
<dbReference type="InterPro" id="IPR050243">
    <property type="entry name" value="PHP_phosphatase"/>
</dbReference>
<dbReference type="InterPro" id="IPR003141">
    <property type="entry name" value="Pol/His_phosphatase_N"/>
</dbReference>
<dbReference type="InterPro" id="IPR016195">
    <property type="entry name" value="Pol/histidinol_Pase-like"/>
</dbReference>
<dbReference type="NCBIfam" id="NF006702">
    <property type="entry name" value="PRK09248.1"/>
    <property type="match status" value="1"/>
</dbReference>
<dbReference type="PANTHER" id="PTHR36928">
    <property type="entry name" value="PHOSPHATASE YCDX-RELATED"/>
    <property type="match status" value="1"/>
</dbReference>
<dbReference type="PANTHER" id="PTHR36928:SF1">
    <property type="entry name" value="PHOSPHATASE YCDX-RELATED"/>
    <property type="match status" value="1"/>
</dbReference>
<dbReference type="Pfam" id="PF02811">
    <property type="entry name" value="PHP"/>
    <property type="match status" value="1"/>
</dbReference>
<dbReference type="SMART" id="SM00481">
    <property type="entry name" value="POLIIIAc"/>
    <property type="match status" value="1"/>
</dbReference>
<dbReference type="SUPFAM" id="SSF89550">
    <property type="entry name" value="PHP domain-like"/>
    <property type="match status" value="1"/>
</dbReference>
<accession>A9MH26</accession>
<organism>
    <name type="scientific">Salmonella arizonae (strain ATCC BAA-731 / CDC346-86 / RSK2980)</name>
    <dbReference type="NCBI Taxonomy" id="41514"/>
    <lineage>
        <taxon>Bacteria</taxon>
        <taxon>Pseudomonadati</taxon>
        <taxon>Pseudomonadota</taxon>
        <taxon>Gammaproteobacteria</taxon>
        <taxon>Enterobacterales</taxon>
        <taxon>Enterobacteriaceae</taxon>
        <taxon>Salmonella</taxon>
    </lineage>
</organism>
<reference key="1">
    <citation type="submission" date="2007-11" db="EMBL/GenBank/DDBJ databases">
        <authorList>
            <consortium name="The Salmonella enterica serovar Arizonae Genome Sequencing Project"/>
            <person name="McClelland M."/>
            <person name="Sanderson E.K."/>
            <person name="Porwollik S."/>
            <person name="Spieth J."/>
            <person name="Clifton W.S."/>
            <person name="Fulton R."/>
            <person name="Chunyan W."/>
            <person name="Wollam A."/>
            <person name="Shah N."/>
            <person name="Pepin K."/>
            <person name="Bhonagiri V."/>
            <person name="Nash W."/>
            <person name="Johnson M."/>
            <person name="Thiruvilangam P."/>
            <person name="Wilson R."/>
        </authorList>
    </citation>
    <scope>NUCLEOTIDE SEQUENCE [LARGE SCALE GENOMIC DNA]</scope>
    <source>
        <strain>ATCC BAA-731 / CDC346-86 / RSK2980</strain>
    </source>
</reference>
<name>YCDX_SALAR</name>
<proteinExistence type="inferred from homology"/>
<evidence type="ECO:0000255" key="1">
    <source>
        <dbReference type="HAMAP-Rule" id="MF_01561"/>
    </source>
</evidence>
<keyword id="KW-0378">Hydrolase</keyword>
<keyword id="KW-0479">Metal-binding</keyword>
<keyword id="KW-1185">Reference proteome</keyword>
<keyword id="KW-0862">Zinc</keyword>